<feature type="chain" id="PRO_1000191570" description="Nucleoid-associated protein VS_0951">
    <location>
        <begin position="1"/>
        <end position="334"/>
    </location>
</feature>
<proteinExistence type="inferred from homology"/>
<dbReference type="EMBL" id="FM954972">
    <property type="protein sequence ID" value="CAV17968.1"/>
    <property type="molecule type" value="Genomic_DNA"/>
</dbReference>
<dbReference type="SMR" id="B7VLR2"/>
<dbReference type="STRING" id="575788.VS_0951"/>
<dbReference type="KEGG" id="vsp:VS_0951"/>
<dbReference type="PATRIC" id="fig|575788.5.peg.2274"/>
<dbReference type="eggNOG" id="COG3081">
    <property type="taxonomic scope" value="Bacteria"/>
</dbReference>
<dbReference type="HOGENOM" id="CLU_063050_0_1_6"/>
<dbReference type="Proteomes" id="UP000009100">
    <property type="component" value="Chromosome 1"/>
</dbReference>
<dbReference type="GO" id="GO:0043590">
    <property type="term" value="C:bacterial nucleoid"/>
    <property type="evidence" value="ECO:0007669"/>
    <property type="project" value="TreeGrafter"/>
</dbReference>
<dbReference type="GO" id="GO:0005737">
    <property type="term" value="C:cytoplasm"/>
    <property type="evidence" value="ECO:0007669"/>
    <property type="project" value="UniProtKB-UniRule"/>
</dbReference>
<dbReference type="GO" id="GO:0003690">
    <property type="term" value="F:double-stranded DNA binding"/>
    <property type="evidence" value="ECO:0007669"/>
    <property type="project" value="TreeGrafter"/>
</dbReference>
<dbReference type="GO" id="GO:0003727">
    <property type="term" value="F:single-stranded RNA binding"/>
    <property type="evidence" value="ECO:0007669"/>
    <property type="project" value="TreeGrafter"/>
</dbReference>
<dbReference type="HAMAP" id="MF_00730">
    <property type="entry name" value="NdpA"/>
    <property type="match status" value="1"/>
</dbReference>
<dbReference type="InterPro" id="IPR007358">
    <property type="entry name" value="Nucleoid_associated_NdpA"/>
</dbReference>
<dbReference type="NCBIfam" id="NF001557">
    <property type="entry name" value="PRK00378.1"/>
    <property type="match status" value="1"/>
</dbReference>
<dbReference type="PANTHER" id="PTHR38772">
    <property type="match status" value="1"/>
</dbReference>
<dbReference type="PANTHER" id="PTHR38772:SF1">
    <property type="entry name" value="NUCLEOID-ASSOCIATED PROTEIN YEJK"/>
    <property type="match status" value="1"/>
</dbReference>
<dbReference type="Pfam" id="PF04245">
    <property type="entry name" value="NA37"/>
    <property type="match status" value="1"/>
</dbReference>
<name>NDPA_VIBA3</name>
<accession>B7VLR2</accession>
<evidence type="ECO:0000255" key="1">
    <source>
        <dbReference type="HAMAP-Rule" id="MF_00730"/>
    </source>
</evidence>
<reference key="1">
    <citation type="submission" date="2009-02" db="EMBL/GenBank/DDBJ databases">
        <title>Vibrio splendidus str. LGP32 complete genome.</title>
        <authorList>
            <person name="Mazel D."/>
            <person name="Le Roux F."/>
        </authorList>
    </citation>
    <scope>NUCLEOTIDE SEQUENCE [LARGE SCALE GENOMIC DNA]</scope>
    <source>
        <strain>LGP32</strain>
    </source>
</reference>
<comment type="subcellular location">
    <subcellularLocation>
        <location evidence="1">Cytoplasm</location>
        <location evidence="1">Nucleoid</location>
    </subcellularLocation>
</comment>
<comment type="similarity">
    <text evidence="1">Belongs to the YejK family.</text>
</comment>
<sequence>MSLHLSNVILHQLSKNDQEELIVNYRAESLENDTASENLVAELHRVFNSKAGKGFGSFKSDSEFQQSLHEFRAGEQSFYDFSQKSALRLKDELSKYPFADEGTLVLAEYQSLATDYLFIGLLPSNQSLKVTEGLDISATDYLDISKMDIVARLDLSTYDTDKESNRYLTYIKGRVGRKVADFFLDFLQAEVGLDAKQQNQVLMQAVEDFVSDSKLEKEEAISYKKQVADYCNEQLKAGDEVQVRELSGELPASTDGTSFFDYTSEQGYELEDSFPADRATMRKLTKFVGAGGGLNVSFDSLLLGERIFYDPETDTLTIKGTPPNLRDQLTRNKS</sequence>
<organism>
    <name type="scientific">Vibrio atlanticus (strain LGP32)</name>
    <name type="common">Vibrio splendidus (strain Mel32)</name>
    <dbReference type="NCBI Taxonomy" id="575788"/>
    <lineage>
        <taxon>Bacteria</taxon>
        <taxon>Pseudomonadati</taxon>
        <taxon>Pseudomonadota</taxon>
        <taxon>Gammaproteobacteria</taxon>
        <taxon>Vibrionales</taxon>
        <taxon>Vibrionaceae</taxon>
        <taxon>Vibrio</taxon>
    </lineage>
</organism>
<protein>
    <recommendedName>
        <fullName evidence="1">Nucleoid-associated protein VS_0951</fullName>
    </recommendedName>
</protein>
<keyword id="KW-0963">Cytoplasm</keyword>
<gene>
    <name type="ordered locus">VS_0951</name>
</gene>